<feature type="chain" id="PRO_0000444395" description="FsC-acetyl coenzyme A-N(2)-transacetylase">
    <location>
        <begin position="1"/>
        <end position="235"/>
    </location>
</feature>
<feature type="domain" description="N-acetyltransferase" evidence="2">
    <location>
        <begin position="14"/>
        <end position="190"/>
    </location>
</feature>
<feature type="binding site" evidence="1">
    <location>
        <begin position="106"/>
        <end position="108"/>
    </location>
    <ligand>
        <name>CoA</name>
        <dbReference type="ChEBI" id="CHEBI:57287"/>
    </ligand>
</feature>
<feature type="binding site" evidence="1">
    <location>
        <position position="114"/>
    </location>
    <ligand>
        <name>CoA</name>
        <dbReference type="ChEBI" id="CHEBI:57287"/>
    </ligand>
</feature>
<feature type="binding site" evidence="1">
    <location>
        <position position="146"/>
    </location>
    <ligand>
        <name>CoA</name>
        <dbReference type="ChEBI" id="CHEBI:57287"/>
    </ligand>
</feature>
<feature type="binding site" evidence="1">
    <location>
        <begin position="151"/>
        <end position="153"/>
    </location>
    <ligand>
        <name>CoA</name>
        <dbReference type="ChEBI" id="CHEBI:57287"/>
    </ligand>
</feature>
<reference key="1">
    <citation type="journal article" date="2005" name="Nature">
        <title>Genomic sequence of the pathogenic and allergenic filamentous fungus Aspergillus fumigatus.</title>
        <authorList>
            <person name="Nierman W.C."/>
            <person name="Pain A."/>
            <person name="Anderson M.J."/>
            <person name="Wortman J.R."/>
            <person name="Kim H.S."/>
            <person name="Arroyo J."/>
            <person name="Berriman M."/>
            <person name="Abe K."/>
            <person name="Archer D.B."/>
            <person name="Bermejo C."/>
            <person name="Bennett J.W."/>
            <person name="Bowyer P."/>
            <person name="Chen D."/>
            <person name="Collins M."/>
            <person name="Coulsen R."/>
            <person name="Davies R."/>
            <person name="Dyer P.S."/>
            <person name="Farman M.L."/>
            <person name="Fedorova N."/>
            <person name="Fedorova N.D."/>
            <person name="Feldblyum T.V."/>
            <person name="Fischer R."/>
            <person name="Fosker N."/>
            <person name="Fraser A."/>
            <person name="Garcia J.L."/>
            <person name="Garcia M.J."/>
            <person name="Goble A."/>
            <person name="Goldman G.H."/>
            <person name="Gomi K."/>
            <person name="Griffith-Jones S."/>
            <person name="Gwilliam R."/>
            <person name="Haas B.J."/>
            <person name="Haas H."/>
            <person name="Harris D.E."/>
            <person name="Horiuchi H."/>
            <person name="Huang J."/>
            <person name="Humphray S."/>
            <person name="Jimenez J."/>
            <person name="Keller N."/>
            <person name="Khouri H."/>
            <person name="Kitamoto K."/>
            <person name="Kobayashi T."/>
            <person name="Konzack S."/>
            <person name="Kulkarni R."/>
            <person name="Kumagai T."/>
            <person name="Lafton A."/>
            <person name="Latge J.-P."/>
            <person name="Li W."/>
            <person name="Lord A."/>
            <person name="Lu C."/>
            <person name="Majoros W.H."/>
            <person name="May G.S."/>
            <person name="Miller B.L."/>
            <person name="Mohamoud Y."/>
            <person name="Molina M."/>
            <person name="Monod M."/>
            <person name="Mouyna I."/>
            <person name="Mulligan S."/>
            <person name="Murphy L.D."/>
            <person name="O'Neil S."/>
            <person name="Paulsen I."/>
            <person name="Penalva M.A."/>
            <person name="Pertea M."/>
            <person name="Price C."/>
            <person name="Pritchard B.L."/>
            <person name="Quail M.A."/>
            <person name="Rabbinowitsch E."/>
            <person name="Rawlins N."/>
            <person name="Rajandream M.A."/>
            <person name="Reichard U."/>
            <person name="Renauld H."/>
            <person name="Robson G.D."/>
            <person name="Rodriguez de Cordoba S."/>
            <person name="Rodriguez-Pena J.M."/>
            <person name="Ronning C.M."/>
            <person name="Rutter S."/>
            <person name="Salzberg S.L."/>
            <person name="Sanchez M."/>
            <person name="Sanchez-Ferrero J.C."/>
            <person name="Saunders D."/>
            <person name="Seeger K."/>
            <person name="Squares R."/>
            <person name="Squares S."/>
            <person name="Takeuchi M."/>
            <person name="Tekaia F."/>
            <person name="Turner G."/>
            <person name="Vazquez de Aldana C.R."/>
            <person name="Weidman J."/>
            <person name="White O."/>
            <person name="Woodward J.R."/>
            <person name="Yu J.-H."/>
            <person name="Fraser C.M."/>
            <person name="Galagan J.E."/>
            <person name="Asai K."/>
            <person name="Machida M."/>
            <person name="Hall N."/>
            <person name="Barrell B.G."/>
            <person name="Denning D.W."/>
        </authorList>
    </citation>
    <scope>NUCLEOTIDE SEQUENCE [LARGE SCALE GENOMIC DNA]</scope>
    <source>
        <strain>ATCC MYA-4609 / CBS 101355 / FGSC A1100 / Af293</strain>
    </source>
</reference>
<reference key="2">
    <citation type="journal article" date="2004" name="J. Exp. Med.">
        <title>Siderophore biosynthesis but not reductive iron assimilation is essential for Aspergillus fumigatus virulence.</title>
        <authorList>
            <person name="Schrettl M."/>
            <person name="Bignell E."/>
            <person name="Kragl C."/>
            <person name="Joechl C."/>
            <person name="Rogers T."/>
            <person name="Arst H.N. Jr."/>
            <person name="Haynes K."/>
            <person name="Haas H."/>
        </authorList>
    </citation>
    <scope>FUNCTION</scope>
</reference>
<reference key="3">
    <citation type="journal article" date="2005" name="Infect. Immun.">
        <title>The Aspergillus fumigatus siderophore biosynthetic gene sidA, encoding L-ornithine N(5)-oxygenase, is required for virulence.</title>
        <authorList>
            <person name="Hissen A.H."/>
            <person name="Wan A.N."/>
            <person name="Warwas M.L."/>
            <person name="Pinto L.J."/>
            <person name="Moore M.M."/>
        </authorList>
    </citation>
    <scope>FUNCTION</scope>
</reference>
<reference key="4">
    <citation type="journal article" date="2007" name="PLoS Pathog.">
        <title>Distinct roles for intra- and extracellular siderophores during Aspergillus fumigatus infection.</title>
        <authorList>
            <person name="Schrettl M."/>
            <person name="Bignell E."/>
            <person name="Kragl C."/>
            <person name="Sabiha Y."/>
            <person name="Loss O."/>
            <person name="Eisendle M."/>
            <person name="Wallner A."/>
            <person name="Arst H.N. Jr."/>
            <person name="Haynes K."/>
            <person name="Haas H."/>
        </authorList>
    </citation>
    <scope>FUNCTION</scope>
    <scope>DISRUPTION PHENOTYPE</scope>
    <scope>INDUCTION</scope>
</reference>
<reference key="5">
    <citation type="journal article" date="2008" name="Mol. Microbiol.">
        <title>SreA-mediated iron regulation in Aspergillus fumigatus.</title>
        <authorList>
            <person name="Schrettl M."/>
            <person name="Kim H.S."/>
            <person name="Eisendle M."/>
            <person name="Kragl C."/>
            <person name="Nierman W.C."/>
            <person name="Heinekamp T."/>
            <person name="Werner E.R."/>
            <person name="Jacobsen I."/>
            <person name="Illmer P."/>
            <person name="Yi H."/>
            <person name="Brakhage A.A."/>
            <person name="Haas H."/>
        </authorList>
    </citation>
    <scope>INDUCTION</scope>
</reference>
<reference key="6">
    <citation type="journal article" date="2011" name="Appl. Environ. Microbiol.">
        <title>SidL, an Aspergillus fumigatus transacetylase involved in biosynthesis of the siderophores ferricrocin and hydroxyferricrocin.</title>
        <authorList>
            <person name="Blatzer M."/>
            <person name="Schrettl M."/>
            <person name="Sarg B."/>
            <person name="Lindner H.H."/>
            <person name="Pfaller K."/>
            <person name="Haas H."/>
        </authorList>
    </citation>
    <scope>FUNCTION</scope>
</reference>
<reference key="7">
    <citation type="journal article" date="2012" name="Proc. Natl. Acad. Sci. U.S.A.">
        <title>Mevalonate governs interdependency of ergosterol and siderophore biosyntheses in the fungal pathogen Aspergillus fumigatus.</title>
        <authorList>
            <person name="Yasmin S."/>
            <person name="Alcazar-Fuoli L."/>
            <person name="Gruendlinger M."/>
            <person name="Puempel T."/>
            <person name="Cairns T."/>
            <person name="Blatzer M."/>
            <person name="Lopez J.F."/>
            <person name="Grimalt J.O."/>
            <person name="Bignell E."/>
            <person name="Haas H."/>
        </authorList>
    </citation>
    <scope>FUNCTION</scope>
</reference>
<gene>
    <name evidence="8" type="primary">sidG</name>
    <name type="ORF">AFUA_3G03650</name>
</gene>
<proteinExistence type="evidence at transcript level"/>
<organism>
    <name type="scientific">Aspergillus fumigatus (strain ATCC MYA-4609 / CBS 101355 / FGSC A1100 / Af293)</name>
    <name type="common">Neosartorya fumigata</name>
    <dbReference type="NCBI Taxonomy" id="330879"/>
    <lineage>
        <taxon>Eukaryota</taxon>
        <taxon>Fungi</taxon>
        <taxon>Dikarya</taxon>
        <taxon>Ascomycota</taxon>
        <taxon>Pezizomycotina</taxon>
        <taxon>Eurotiomycetes</taxon>
        <taxon>Eurotiomycetidae</taxon>
        <taxon>Eurotiales</taxon>
        <taxon>Aspergillaceae</taxon>
        <taxon>Aspergillus</taxon>
        <taxon>Aspergillus subgen. Fumigati</taxon>
    </lineage>
</organism>
<sequence length="235" mass="26838">MTIKAQPTLHTARLELVPLGHEHREFTMKLDMDPEVMKMVAFGRPFTEDEAIQVHTWLMNCATSVPGFGTWVGFAEGEFVGWWVLAPVPTTENPKSFRTDRTEYGFRVSPKFWGQGYAKEGAREMVRYAFEELGLAEVIGETMTINMASRAVMAGCGLTHVETFFNKYDTPPPGIEEGEVRYSITREEWLRMQKPSMTRSRWFPAFASWLPRLLLSRLWSYIFQGRRLAAGAASP</sequence>
<evidence type="ECO:0000250" key="1">
    <source>
        <dbReference type="UniProtKB" id="Q9I0Q8"/>
    </source>
</evidence>
<evidence type="ECO:0000255" key="2">
    <source>
        <dbReference type="PROSITE-ProRule" id="PRU00532"/>
    </source>
</evidence>
<evidence type="ECO:0000269" key="3">
    <source>
    </source>
</evidence>
<evidence type="ECO:0000269" key="4">
    <source>
    </source>
</evidence>
<evidence type="ECO:0000269" key="5">
    <source>
    </source>
</evidence>
<evidence type="ECO:0000269" key="6">
    <source>
    </source>
</evidence>
<evidence type="ECO:0000269" key="7">
    <source>
    </source>
</evidence>
<evidence type="ECO:0000303" key="8">
    <source>
    </source>
</evidence>
<evidence type="ECO:0000305" key="9">
    <source>
    </source>
</evidence>
<accession>Q4WF30</accession>
<name>SIDG_ASPFU</name>
<dbReference type="EC" id="2.3.1.-" evidence="9"/>
<dbReference type="EMBL" id="AAHF01000010">
    <property type="protein sequence ID" value="EAL86647.1"/>
    <property type="molecule type" value="Genomic_DNA"/>
</dbReference>
<dbReference type="RefSeq" id="XP_748685.1">
    <property type="nucleotide sequence ID" value="XM_743592.1"/>
</dbReference>
<dbReference type="SMR" id="Q4WF30"/>
<dbReference type="STRING" id="330879.Q4WF30"/>
<dbReference type="EnsemblFungi" id="EAL86647">
    <property type="protein sequence ID" value="EAL86647"/>
    <property type="gene ID" value="AFUA_3G03650"/>
</dbReference>
<dbReference type="GeneID" id="3505887"/>
<dbReference type="KEGG" id="afm:AFUA_3G03650"/>
<dbReference type="VEuPathDB" id="FungiDB:Afu3g03650"/>
<dbReference type="eggNOG" id="ENOG502SBCZ">
    <property type="taxonomic scope" value="Eukaryota"/>
</dbReference>
<dbReference type="HOGENOM" id="CLU_013985_3_1_1"/>
<dbReference type="InParanoid" id="Q4WF30"/>
<dbReference type="OMA" id="MAVNQGS"/>
<dbReference type="OrthoDB" id="630895at2759"/>
<dbReference type="Proteomes" id="UP000002530">
    <property type="component" value="Chromosome 3"/>
</dbReference>
<dbReference type="GO" id="GO:0016747">
    <property type="term" value="F:acyltransferase activity, transferring groups other than amino-acyl groups"/>
    <property type="evidence" value="ECO:0007669"/>
    <property type="project" value="InterPro"/>
</dbReference>
<dbReference type="GO" id="GO:0016829">
    <property type="term" value="F:lyase activity"/>
    <property type="evidence" value="ECO:0007669"/>
    <property type="project" value="UniProtKB-KW"/>
</dbReference>
<dbReference type="Gene3D" id="3.40.630.30">
    <property type="match status" value="1"/>
</dbReference>
<dbReference type="InterPro" id="IPR016181">
    <property type="entry name" value="Acyl_CoA_acyltransferase"/>
</dbReference>
<dbReference type="InterPro" id="IPR000182">
    <property type="entry name" value="GNAT_dom"/>
</dbReference>
<dbReference type="InterPro" id="IPR051531">
    <property type="entry name" value="N-acetyltransferase"/>
</dbReference>
<dbReference type="PANTHER" id="PTHR43792">
    <property type="entry name" value="GNAT FAMILY, PUTATIVE (AFU_ORTHOLOGUE AFUA_3G00765)-RELATED-RELATED"/>
    <property type="match status" value="1"/>
</dbReference>
<dbReference type="PANTHER" id="PTHR43792:SF16">
    <property type="entry name" value="N-ACETYLTRANSFERASE DOMAIN-CONTAINING PROTEIN"/>
    <property type="match status" value="1"/>
</dbReference>
<dbReference type="Pfam" id="PF13302">
    <property type="entry name" value="Acetyltransf_3"/>
    <property type="match status" value="1"/>
</dbReference>
<dbReference type="SUPFAM" id="SSF55729">
    <property type="entry name" value="Acyl-CoA N-acyltransferases (Nat)"/>
    <property type="match status" value="1"/>
</dbReference>
<dbReference type="PROSITE" id="PS51186">
    <property type="entry name" value="GNAT"/>
    <property type="match status" value="1"/>
</dbReference>
<protein>
    <recommendedName>
        <fullName evidence="8">FsC-acetyl coenzyme A-N(2)-transacetylase</fullName>
        <ecNumber evidence="9">2.3.1.-</ecNumber>
    </recommendedName>
    <alternativeName>
        <fullName evidence="8">Siderophore biosynthesis protein H</fullName>
    </alternativeName>
</protein>
<keyword id="KW-0456">Lyase</keyword>
<keyword id="KW-1185">Reference proteome</keyword>
<keyword id="KW-0808">Transferase</keyword>
<comment type="function">
    <text evidence="3 4 5 6 7">FsC-acetyl coenzyme A-N(2)-transacetylase; part of the siderophore biosynthetic pathway (PubMed:21622789). Aspergillus fumigatus produces 4 types of siderophores, low-molecular-mass iron chelators, including excreted fusarinine C (FsC) and triacetylfusarinine C (TAFC) for iron uptake and intacellular ferricrocin (FC) for hyphal and hydroxyferricrocin (HFC) for conidial iron distribution and storage. TAFC consists of 3 N(2)-acetyl-N(5)-anhydromevalonyl-N(5)-hydroxyornithine residues cyclically linked by ester bonds; FC is a cyclic hexapeptide with the structure Gly-Ser-Gly-(N(5)-acetyl-N(5)-hydroxyornithine)x3. The biosynthesis of all four siderophores depends on the hydroxylation of ornithine, catalyzed by the monooxygenase sidA (PubMed:15504822, PubMed:16113265). Subsequently, the pathways for biosynthesis of extra- and intracellular siderophores split (PubMed:17845073). For biosynthesis of extracellular siderophores, the transacylase sidF transfers anhydromevalonyl to N(5)-hydroxyornithine (PubMed:17845073). The required anhydromevalonyl-CoA moiety is derived from mevalonate by CoA ligation and dehydration catalyzed by sidI and sidH respectively (PubMed:22106303). The acetylation of N(5)-hydroxyornithine for FC biosynthesis involves the constitutively expressed sidL (PubMed:21622789). FC is hydroxylated to HFC by an as yet uncharacterized enzyme during conidiation (PubMed:17845073). Assembly of fusarinine C (FsC) and FC is catalyzed by two different nonribosomal peptide synthetases (NRPS), sidD and sidC respectively (PubMed:17845073). Subsequently, sidG catalyzes N2-acetylation of FsC for forming TAFC (PubMed:17845073). Both extra- and intracellular siderophores are crucial for growth during iron limitation and virulence (PubMed:16113265).</text>
</comment>
<comment type="pathway">
    <text evidence="5">Siderophore biosynthesis.</text>
</comment>
<comment type="induction">
    <text evidence="5">Expression is induced during iron starvation (PubMed:17845073).</text>
</comment>
<comment type="disruption phenotype">
    <text evidence="5">Eliminates TAFC production and increases FsC production about 10-fold (PubMed:17845073). Does not affect the production of FC (PubMed:17845073).</text>
</comment>